<keyword id="KW-0320">Glycogen biosynthesis</keyword>
<keyword id="KW-0328">Glycosyltransferase</keyword>
<keyword id="KW-1185">Reference proteome</keyword>
<keyword id="KW-0808">Transferase</keyword>
<reference key="1">
    <citation type="journal article" date="2015" name="Genome Announc.">
        <title>Complete genome sequence of Anaeromyxobacter sp. Fw109-5, an anaerobic, metal-reducing bacterium isolated from a contaminated subsurface environment.</title>
        <authorList>
            <person name="Hwang C."/>
            <person name="Copeland A."/>
            <person name="Lucas S."/>
            <person name="Lapidus A."/>
            <person name="Barry K."/>
            <person name="Glavina Del Rio T."/>
            <person name="Dalin E."/>
            <person name="Tice H."/>
            <person name="Pitluck S."/>
            <person name="Sims D."/>
            <person name="Brettin T."/>
            <person name="Bruce D.C."/>
            <person name="Detter J.C."/>
            <person name="Han C.S."/>
            <person name="Schmutz J."/>
            <person name="Larimer F.W."/>
            <person name="Land M.L."/>
            <person name="Hauser L.J."/>
            <person name="Kyrpides N."/>
            <person name="Lykidis A."/>
            <person name="Richardson P."/>
            <person name="Belieav A."/>
            <person name="Sanford R.A."/>
            <person name="Loeffler F.E."/>
            <person name="Fields M.W."/>
        </authorList>
    </citation>
    <scope>NUCLEOTIDE SEQUENCE [LARGE SCALE GENOMIC DNA]</scope>
    <source>
        <strain>Fw109-5</strain>
    </source>
</reference>
<gene>
    <name evidence="1" type="primary">glgA</name>
    <name type="ordered locus">Anae109_0139</name>
</gene>
<sequence>MEILFVASEVAPWSKTGGLGDVAGALPRALAARGHAVSVVTPRYGTIDPHAHRLRPLHRALDVRGEPTTLWVSRDRAPVYFVEHEHFFGSRRGLYGEAHDYGDNAERFAYLARAALALPGALGLRPHIVHLNDWQTGLVPFLLRREHARDAALAGARTVFTIHNLAYQGVFSKHVVPALGLPWDVFRYEAMEFHDQLNFLKAGLVFADALTTVSPTYAREIATPQGGVGLDALLRHRARDLHGILNGIDVEEWDPATDRHLPARYSAADLSGKAACKSALQRELGLPERPDVPLVAMIGRLAEQKGLDLVVAALGELLARDLQLVLLGTGRPELEEAFRRAARERPDRMAARIGFDEGLAHRMEAGADLFLMPSRFEPCGLNQMYSLRYGTIPVVRAVGGLEDTVEDFDGWSRGTGFKFRDYHPQAMLLAVRRALEAHRDRRAWRAMMLRGMALDFSWDRSAQAYEALYRSLAAP</sequence>
<organism>
    <name type="scientific">Anaeromyxobacter sp. (strain Fw109-5)</name>
    <dbReference type="NCBI Taxonomy" id="404589"/>
    <lineage>
        <taxon>Bacteria</taxon>
        <taxon>Pseudomonadati</taxon>
        <taxon>Myxococcota</taxon>
        <taxon>Myxococcia</taxon>
        <taxon>Myxococcales</taxon>
        <taxon>Cystobacterineae</taxon>
        <taxon>Anaeromyxobacteraceae</taxon>
        <taxon>Anaeromyxobacter</taxon>
    </lineage>
</organism>
<evidence type="ECO:0000255" key="1">
    <source>
        <dbReference type="HAMAP-Rule" id="MF_00484"/>
    </source>
</evidence>
<name>GLGA_ANADF</name>
<dbReference type="EC" id="2.4.1.21" evidence="1"/>
<dbReference type="EMBL" id="CP000769">
    <property type="protein sequence ID" value="ABS24357.1"/>
    <property type="molecule type" value="Genomic_DNA"/>
</dbReference>
<dbReference type="RefSeq" id="WP_011984463.1">
    <property type="nucleotide sequence ID" value="NC_009675.1"/>
</dbReference>
<dbReference type="SMR" id="A7H6L1"/>
<dbReference type="STRING" id="404589.Anae109_0139"/>
<dbReference type="CAZy" id="GT5">
    <property type="family name" value="Glycosyltransferase Family 5"/>
</dbReference>
<dbReference type="KEGG" id="afw:Anae109_0139"/>
<dbReference type="eggNOG" id="COG0297">
    <property type="taxonomic scope" value="Bacteria"/>
</dbReference>
<dbReference type="HOGENOM" id="CLU_009583_18_5_7"/>
<dbReference type="OrthoDB" id="9808590at2"/>
<dbReference type="UniPathway" id="UPA00164"/>
<dbReference type="Proteomes" id="UP000006382">
    <property type="component" value="Chromosome"/>
</dbReference>
<dbReference type="GO" id="GO:0005829">
    <property type="term" value="C:cytosol"/>
    <property type="evidence" value="ECO:0007669"/>
    <property type="project" value="TreeGrafter"/>
</dbReference>
<dbReference type="GO" id="GO:0009011">
    <property type="term" value="F:alpha-1,4-glucan glucosyltransferase (ADP-glucose donor) activity"/>
    <property type="evidence" value="ECO:0007669"/>
    <property type="project" value="UniProtKB-UniRule"/>
</dbReference>
<dbReference type="GO" id="GO:0004373">
    <property type="term" value="F:alpha-1,4-glucan glucosyltransferase (UDP-glucose donor) activity"/>
    <property type="evidence" value="ECO:0007669"/>
    <property type="project" value="InterPro"/>
</dbReference>
<dbReference type="GO" id="GO:0005978">
    <property type="term" value="P:glycogen biosynthetic process"/>
    <property type="evidence" value="ECO:0007669"/>
    <property type="project" value="UniProtKB-UniRule"/>
</dbReference>
<dbReference type="CDD" id="cd03791">
    <property type="entry name" value="GT5_Glycogen_synthase_DULL1-like"/>
    <property type="match status" value="1"/>
</dbReference>
<dbReference type="Gene3D" id="3.40.50.2000">
    <property type="entry name" value="Glycogen Phosphorylase B"/>
    <property type="match status" value="2"/>
</dbReference>
<dbReference type="HAMAP" id="MF_00484">
    <property type="entry name" value="Glycogen_synth"/>
    <property type="match status" value="1"/>
</dbReference>
<dbReference type="InterPro" id="IPR001296">
    <property type="entry name" value="Glyco_trans_1"/>
</dbReference>
<dbReference type="InterPro" id="IPR011835">
    <property type="entry name" value="GS/SS"/>
</dbReference>
<dbReference type="InterPro" id="IPR013534">
    <property type="entry name" value="Starch_synth_cat_dom"/>
</dbReference>
<dbReference type="NCBIfam" id="TIGR02095">
    <property type="entry name" value="glgA"/>
    <property type="match status" value="1"/>
</dbReference>
<dbReference type="NCBIfam" id="NF001899">
    <property type="entry name" value="PRK00654.1-2"/>
    <property type="match status" value="1"/>
</dbReference>
<dbReference type="PANTHER" id="PTHR45825:SF11">
    <property type="entry name" value="ALPHA AMYLASE DOMAIN-CONTAINING PROTEIN"/>
    <property type="match status" value="1"/>
</dbReference>
<dbReference type="PANTHER" id="PTHR45825">
    <property type="entry name" value="GRANULE-BOUND STARCH SYNTHASE 1, CHLOROPLASTIC/AMYLOPLASTIC"/>
    <property type="match status" value="1"/>
</dbReference>
<dbReference type="Pfam" id="PF08323">
    <property type="entry name" value="Glyco_transf_5"/>
    <property type="match status" value="1"/>
</dbReference>
<dbReference type="Pfam" id="PF00534">
    <property type="entry name" value="Glycos_transf_1"/>
    <property type="match status" value="1"/>
</dbReference>
<dbReference type="SUPFAM" id="SSF53756">
    <property type="entry name" value="UDP-Glycosyltransferase/glycogen phosphorylase"/>
    <property type="match status" value="1"/>
</dbReference>
<comment type="function">
    <text evidence="1">Synthesizes alpha-1,4-glucan chains using ADP-glucose.</text>
</comment>
<comment type="catalytic activity">
    <reaction evidence="1">
        <text>[(1-&gt;4)-alpha-D-glucosyl](n) + ADP-alpha-D-glucose = [(1-&gt;4)-alpha-D-glucosyl](n+1) + ADP + H(+)</text>
        <dbReference type="Rhea" id="RHEA:18189"/>
        <dbReference type="Rhea" id="RHEA-COMP:9584"/>
        <dbReference type="Rhea" id="RHEA-COMP:9587"/>
        <dbReference type="ChEBI" id="CHEBI:15378"/>
        <dbReference type="ChEBI" id="CHEBI:15444"/>
        <dbReference type="ChEBI" id="CHEBI:57498"/>
        <dbReference type="ChEBI" id="CHEBI:456216"/>
        <dbReference type="EC" id="2.4.1.21"/>
    </reaction>
</comment>
<comment type="pathway">
    <text evidence="1">Glycan biosynthesis; glycogen biosynthesis.</text>
</comment>
<comment type="similarity">
    <text evidence="1">Belongs to the glycosyltransferase 1 family. Bacterial/plant glycogen synthase subfamily.</text>
</comment>
<proteinExistence type="inferred from homology"/>
<protein>
    <recommendedName>
        <fullName evidence="1">Glycogen synthase</fullName>
        <ecNumber evidence="1">2.4.1.21</ecNumber>
    </recommendedName>
    <alternativeName>
        <fullName evidence="1">Starch [bacterial glycogen] synthase</fullName>
    </alternativeName>
</protein>
<feature type="chain" id="PRO_1000014343" description="Glycogen synthase">
    <location>
        <begin position="1"/>
        <end position="475"/>
    </location>
</feature>
<feature type="binding site" evidence="1">
    <location>
        <position position="15"/>
    </location>
    <ligand>
        <name>ADP-alpha-D-glucose</name>
        <dbReference type="ChEBI" id="CHEBI:57498"/>
    </ligand>
</feature>
<accession>A7H6L1</accession>